<sequence length="448" mass="46343">MRFDPSEIGEVLEMLLFRELDIRAVTLSVNTLPAIRPTVGDTLAALEETLEPLLKRLRPAVERVASRLGVKIVTVRLAVSPISIMLEPIGKAEAAVEIAKHLDGLAEKHGVDMVGGFSAFVHAGVSRGDAALMEALPEALNSTRRLAGFLNVASTATGVNMDAVRAAAEAVLKMEPHAAARFAATANMPEDVPFMPGAYHGLGLPDAVVNIAVSGPGVIEAVVRNMPNADVRTLHDAIKRAAFKITRLGELVGREVAKELGVPFGSVDLSVAPSPKVGDSVAAILEAVGLPRVGAPGTLFALALFVDAVKKGGAMATSTIGGLSGAFIPVSEDVVMAEAAREGALTFDTLKSTLAVCNTGIDMAGIPGDAPPDAVAALIADVMAVAVALDKALGVRLVPIPGAKPGDVYDLGGLYGRVVVMDLGKYRDIPLARRKGTAPPAVERLKKG</sequence>
<dbReference type="EMBL" id="CP000504">
    <property type="protein sequence ID" value="ABL87935.1"/>
    <property type="molecule type" value="Genomic_DNA"/>
</dbReference>
<dbReference type="RefSeq" id="WP_011762511.1">
    <property type="nucleotide sequence ID" value="NC_008701.1"/>
</dbReference>
<dbReference type="SMR" id="A1RSK3"/>
<dbReference type="STRING" id="384616.Pisl_0759"/>
<dbReference type="GeneID" id="4617988"/>
<dbReference type="KEGG" id="pis:Pisl_0759"/>
<dbReference type="eggNOG" id="arCOG04321">
    <property type="taxonomic scope" value="Archaea"/>
</dbReference>
<dbReference type="HOGENOM" id="CLU_048704_0_0_2"/>
<dbReference type="OrthoDB" id="21376at2157"/>
<dbReference type="Proteomes" id="UP000002595">
    <property type="component" value="Chromosome"/>
</dbReference>
<dbReference type="Gene3D" id="3.20.70.20">
    <property type="match status" value="1"/>
</dbReference>
<dbReference type="HAMAP" id="MF_01221">
    <property type="entry name" value="UPF0210"/>
    <property type="match status" value="1"/>
</dbReference>
<dbReference type="InterPro" id="IPR007841">
    <property type="entry name" value="UPF0210"/>
</dbReference>
<dbReference type="NCBIfam" id="NF003700">
    <property type="entry name" value="PRK05313.1"/>
    <property type="match status" value="1"/>
</dbReference>
<dbReference type="PANTHER" id="PTHR37560:SF1">
    <property type="entry name" value="UPF0210 PROTEIN MJ1665"/>
    <property type="match status" value="1"/>
</dbReference>
<dbReference type="PANTHER" id="PTHR37560">
    <property type="entry name" value="UPF0210 PROTEIN SPR0218"/>
    <property type="match status" value="1"/>
</dbReference>
<dbReference type="Pfam" id="PF05167">
    <property type="entry name" value="DUF711"/>
    <property type="match status" value="1"/>
</dbReference>
<dbReference type="SUPFAM" id="SSF51998">
    <property type="entry name" value="PFL-like glycyl radical enzymes"/>
    <property type="match status" value="1"/>
</dbReference>
<evidence type="ECO:0000255" key="1">
    <source>
        <dbReference type="HAMAP-Rule" id="MF_01221"/>
    </source>
</evidence>
<gene>
    <name type="ordered locus">Pisl_0759</name>
</gene>
<organism>
    <name type="scientific">Pyrobaculum islandicum (strain DSM 4184 / JCM 9189 / GEO3)</name>
    <dbReference type="NCBI Taxonomy" id="384616"/>
    <lineage>
        <taxon>Archaea</taxon>
        <taxon>Thermoproteota</taxon>
        <taxon>Thermoprotei</taxon>
        <taxon>Thermoproteales</taxon>
        <taxon>Thermoproteaceae</taxon>
        <taxon>Pyrobaculum</taxon>
    </lineage>
</organism>
<reference key="1">
    <citation type="submission" date="2006-12" db="EMBL/GenBank/DDBJ databases">
        <title>Complete sequence of Pyrobaculum islandicum DSM 4184.</title>
        <authorList>
            <person name="Copeland A."/>
            <person name="Lucas S."/>
            <person name="Lapidus A."/>
            <person name="Barry K."/>
            <person name="Detter J.C."/>
            <person name="Glavina del Rio T."/>
            <person name="Dalin E."/>
            <person name="Tice H."/>
            <person name="Pitluck S."/>
            <person name="Meincke L."/>
            <person name="Brettin T."/>
            <person name="Bruce D."/>
            <person name="Han C."/>
            <person name="Tapia R."/>
            <person name="Gilna P."/>
            <person name="Schmutz J."/>
            <person name="Larimer F."/>
            <person name="Land M."/>
            <person name="Hauser L."/>
            <person name="Kyrpides N."/>
            <person name="Mikhailova N."/>
            <person name="Cozen A.E."/>
            <person name="Fitz-Gibbon S.T."/>
            <person name="House C.H."/>
            <person name="Saltikov C."/>
            <person name="Lowe T."/>
            <person name="Richardson P."/>
        </authorList>
    </citation>
    <scope>NUCLEOTIDE SEQUENCE [LARGE SCALE GENOMIC DNA]</scope>
    <source>
        <strain>DSM 4184 / JCM 9189 / GEO3</strain>
    </source>
</reference>
<accession>A1RSK3</accession>
<name>Y759_PYRIL</name>
<comment type="similarity">
    <text evidence="1">Belongs to the UPF0210 family.</text>
</comment>
<feature type="chain" id="PRO_1000066774" description="UPF0210 protein Pisl_0759">
    <location>
        <begin position="1"/>
        <end position="448"/>
    </location>
</feature>
<proteinExistence type="inferred from homology"/>
<protein>
    <recommendedName>
        <fullName evidence="1">UPF0210 protein Pisl_0759</fullName>
    </recommendedName>
</protein>